<reference key="1">
    <citation type="journal article" date="2001" name="Nature">
        <title>Genome sequence of enterohaemorrhagic Escherichia coli O157:H7.</title>
        <authorList>
            <person name="Perna N.T."/>
            <person name="Plunkett G. III"/>
            <person name="Burland V."/>
            <person name="Mau B."/>
            <person name="Glasner J.D."/>
            <person name="Rose D.J."/>
            <person name="Mayhew G.F."/>
            <person name="Evans P.S."/>
            <person name="Gregor J."/>
            <person name="Kirkpatrick H.A."/>
            <person name="Posfai G."/>
            <person name="Hackett J."/>
            <person name="Klink S."/>
            <person name="Boutin A."/>
            <person name="Shao Y."/>
            <person name="Miller L."/>
            <person name="Grotbeck E.J."/>
            <person name="Davis N.W."/>
            <person name="Lim A."/>
            <person name="Dimalanta E.T."/>
            <person name="Potamousis K."/>
            <person name="Apodaca J."/>
            <person name="Anantharaman T.S."/>
            <person name="Lin J."/>
            <person name="Yen G."/>
            <person name="Schwartz D.C."/>
            <person name="Welch R.A."/>
            <person name="Blattner F.R."/>
        </authorList>
    </citation>
    <scope>NUCLEOTIDE SEQUENCE [LARGE SCALE GENOMIC DNA]</scope>
    <source>
        <strain>O157:H7 / EDL933 / ATCC 700927 / EHEC</strain>
    </source>
</reference>
<reference key="2">
    <citation type="journal article" date="2001" name="DNA Res.">
        <title>Complete genome sequence of enterohemorrhagic Escherichia coli O157:H7 and genomic comparison with a laboratory strain K-12.</title>
        <authorList>
            <person name="Hayashi T."/>
            <person name="Makino K."/>
            <person name="Ohnishi M."/>
            <person name="Kurokawa K."/>
            <person name="Ishii K."/>
            <person name="Yokoyama K."/>
            <person name="Han C.-G."/>
            <person name="Ohtsubo E."/>
            <person name="Nakayama K."/>
            <person name="Murata T."/>
            <person name="Tanaka M."/>
            <person name="Tobe T."/>
            <person name="Iida T."/>
            <person name="Takami H."/>
            <person name="Honda T."/>
            <person name="Sasakawa C."/>
            <person name="Ogasawara N."/>
            <person name="Yasunaga T."/>
            <person name="Kuhara S."/>
            <person name="Shiba T."/>
            <person name="Hattori M."/>
            <person name="Shinagawa H."/>
        </authorList>
    </citation>
    <scope>NUCLEOTIDE SEQUENCE [LARGE SCALE GENOMIC DNA]</scope>
    <source>
        <strain>O157:H7 / Sakai / RIMD 0509952 / EHEC</strain>
    </source>
</reference>
<feature type="chain" id="PRO_0000159298" description="Uncharacterized ferredoxin-like protein YdhY">
    <location>
        <begin position="1"/>
        <end position="208"/>
    </location>
</feature>
<feature type="domain" description="4Fe-4S ferredoxin-type 1" evidence="2">
    <location>
        <begin position="59"/>
        <end position="88"/>
    </location>
</feature>
<feature type="domain" description="4Fe-4S ferredoxin-type 2" evidence="2">
    <location>
        <begin position="114"/>
        <end position="145"/>
    </location>
</feature>
<feature type="domain" description="4Fe-4S ferredoxin-type 3" evidence="2">
    <location>
        <begin position="147"/>
        <end position="176"/>
    </location>
</feature>
<feature type="domain" description="4Fe-4S ferredoxin-type 4" evidence="2">
    <location>
        <begin position="174"/>
        <end position="203"/>
    </location>
</feature>
<feature type="binding site" evidence="1">
    <location>
        <position position="68"/>
    </location>
    <ligand>
        <name>[4Fe-4S] cluster</name>
        <dbReference type="ChEBI" id="CHEBI:49883"/>
        <label>1</label>
    </ligand>
</feature>
<feature type="binding site" evidence="1">
    <location>
        <position position="71"/>
    </location>
    <ligand>
        <name>[4Fe-4S] cluster</name>
        <dbReference type="ChEBI" id="CHEBI:49883"/>
        <label>1</label>
    </ligand>
</feature>
<feature type="binding site" evidence="1">
    <location>
        <position position="74"/>
    </location>
    <ligand>
        <name>[4Fe-4S] cluster</name>
        <dbReference type="ChEBI" id="CHEBI:49883"/>
        <label>1</label>
    </ligand>
</feature>
<feature type="binding site" evidence="1">
    <location>
        <position position="78"/>
    </location>
    <ligand>
        <name>[4Fe-4S] cluster</name>
        <dbReference type="ChEBI" id="CHEBI:49883"/>
        <label>2</label>
    </ligand>
</feature>
<feature type="binding site" evidence="1">
    <location>
        <position position="123"/>
    </location>
    <ligand>
        <name>[4Fe-4S] cluster</name>
        <dbReference type="ChEBI" id="CHEBI:49883"/>
        <label>3</label>
    </ligand>
</feature>
<feature type="binding site" evidence="1">
    <location>
        <position position="126"/>
    </location>
    <ligand>
        <name>[4Fe-4S] cluster</name>
        <dbReference type="ChEBI" id="CHEBI:49883"/>
        <label>3</label>
    </ligand>
</feature>
<feature type="binding site" evidence="1">
    <location>
        <position position="131"/>
    </location>
    <ligand>
        <name>[4Fe-4S] cluster</name>
        <dbReference type="ChEBI" id="CHEBI:49883"/>
        <label>3</label>
    </ligand>
</feature>
<feature type="binding site" evidence="1">
    <location>
        <position position="135"/>
    </location>
    <ligand>
        <name>[4Fe-4S] cluster</name>
        <dbReference type="ChEBI" id="CHEBI:49883"/>
        <label>4</label>
    </ligand>
</feature>
<feature type="binding site" evidence="1">
    <location>
        <position position="156"/>
    </location>
    <ligand>
        <name>[4Fe-4S] cluster</name>
        <dbReference type="ChEBI" id="CHEBI:49883"/>
        <label>4</label>
    </ligand>
</feature>
<feature type="binding site" evidence="1">
    <location>
        <position position="159"/>
    </location>
    <ligand>
        <name>[4Fe-4S] cluster</name>
        <dbReference type="ChEBI" id="CHEBI:49883"/>
        <label>4</label>
    </ligand>
</feature>
<feature type="binding site" evidence="1">
    <location>
        <position position="162"/>
    </location>
    <ligand>
        <name>[4Fe-4S] cluster</name>
        <dbReference type="ChEBI" id="CHEBI:49883"/>
        <label>4</label>
    </ligand>
</feature>
<feature type="binding site" evidence="1">
    <location>
        <position position="166"/>
    </location>
    <ligand>
        <name>[4Fe-4S] cluster</name>
        <dbReference type="ChEBI" id="CHEBI:49883"/>
        <label>3</label>
    </ligand>
</feature>
<feature type="binding site" evidence="1">
    <location>
        <position position="183"/>
    </location>
    <ligand>
        <name>[4Fe-4S] cluster</name>
        <dbReference type="ChEBI" id="CHEBI:49883"/>
        <label>2</label>
    </ligand>
</feature>
<feature type="binding site" evidence="1">
    <location>
        <position position="186"/>
    </location>
    <ligand>
        <name>[4Fe-4S] cluster</name>
        <dbReference type="ChEBI" id="CHEBI:49883"/>
        <label>2</label>
    </ligand>
</feature>
<feature type="binding site" evidence="1">
    <location>
        <position position="189"/>
    </location>
    <ligand>
        <name>[4Fe-4S] cluster</name>
        <dbReference type="ChEBI" id="CHEBI:49883"/>
        <label>2</label>
    </ligand>
</feature>
<feature type="binding site" evidence="1">
    <location>
        <position position="193"/>
    </location>
    <ligand>
        <name>[4Fe-4S] cluster</name>
        <dbReference type="ChEBI" id="CHEBI:49883"/>
        <label>1</label>
    </ligand>
</feature>
<dbReference type="EMBL" id="AE005174">
    <property type="protein sequence ID" value="AAG56661.1"/>
    <property type="molecule type" value="Genomic_DNA"/>
</dbReference>
<dbReference type="EMBL" id="BA000007">
    <property type="protein sequence ID" value="BAB35804.1"/>
    <property type="molecule type" value="Genomic_DNA"/>
</dbReference>
<dbReference type="PIR" id="A85775">
    <property type="entry name" value="A85775"/>
</dbReference>
<dbReference type="PIR" id="E90926">
    <property type="entry name" value="E90926"/>
</dbReference>
<dbReference type="RefSeq" id="NP_310408.1">
    <property type="nucleotide sequence ID" value="NC_002695.1"/>
</dbReference>
<dbReference type="RefSeq" id="WP_001070230.1">
    <property type="nucleotide sequence ID" value="NZ_VOAI01000007.1"/>
</dbReference>
<dbReference type="STRING" id="155864.Z2702"/>
<dbReference type="GeneID" id="914273"/>
<dbReference type="KEGG" id="ece:Z2702"/>
<dbReference type="KEGG" id="ecs:ECs_2381"/>
<dbReference type="PATRIC" id="fig|386585.9.peg.2493"/>
<dbReference type="eggNOG" id="COG0437">
    <property type="taxonomic scope" value="Bacteria"/>
</dbReference>
<dbReference type="HOGENOM" id="CLU_043374_3_2_6"/>
<dbReference type="OMA" id="WYGTADF"/>
<dbReference type="Proteomes" id="UP000000558">
    <property type="component" value="Chromosome"/>
</dbReference>
<dbReference type="Proteomes" id="UP000002519">
    <property type="component" value="Chromosome"/>
</dbReference>
<dbReference type="GO" id="GO:0051539">
    <property type="term" value="F:4 iron, 4 sulfur cluster binding"/>
    <property type="evidence" value="ECO:0007669"/>
    <property type="project" value="UniProtKB-KW"/>
</dbReference>
<dbReference type="GO" id="GO:0046872">
    <property type="term" value="F:metal ion binding"/>
    <property type="evidence" value="ECO:0007669"/>
    <property type="project" value="UniProtKB-KW"/>
</dbReference>
<dbReference type="CDD" id="cd10550">
    <property type="entry name" value="DMSOR_beta_like"/>
    <property type="match status" value="1"/>
</dbReference>
<dbReference type="Gene3D" id="3.30.70.20">
    <property type="match status" value="2"/>
</dbReference>
<dbReference type="InterPro" id="IPR017896">
    <property type="entry name" value="4Fe4S_Fe-S-bd"/>
</dbReference>
<dbReference type="InterPro" id="IPR017900">
    <property type="entry name" value="4Fe4S_Fe_S_CS"/>
</dbReference>
<dbReference type="InterPro" id="IPR050294">
    <property type="entry name" value="RnfB_subfamily"/>
</dbReference>
<dbReference type="NCBIfam" id="NF007382">
    <property type="entry name" value="PRK09898.1"/>
    <property type="match status" value="1"/>
</dbReference>
<dbReference type="PANTHER" id="PTHR42859:SF17">
    <property type="entry name" value="ELECTRON TRANSPORT PROTEIN HYDN-RELATED"/>
    <property type="match status" value="1"/>
</dbReference>
<dbReference type="PANTHER" id="PTHR42859">
    <property type="entry name" value="OXIDOREDUCTASE"/>
    <property type="match status" value="1"/>
</dbReference>
<dbReference type="Pfam" id="PF13247">
    <property type="entry name" value="Fer4_11"/>
    <property type="match status" value="1"/>
</dbReference>
<dbReference type="Pfam" id="PF12800">
    <property type="entry name" value="Fer4_4"/>
    <property type="match status" value="1"/>
</dbReference>
<dbReference type="SUPFAM" id="SSF54862">
    <property type="entry name" value="4Fe-4S ferredoxins"/>
    <property type="match status" value="1"/>
</dbReference>
<dbReference type="PROSITE" id="PS00198">
    <property type="entry name" value="4FE4S_FER_1"/>
    <property type="match status" value="2"/>
</dbReference>
<dbReference type="PROSITE" id="PS51379">
    <property type="entry name" value="4FE4S_FER_2"/>
    <property type="match status" value="4"/>
</dbReference>
<evidence type="ECO:0000250" key="1"/>
<evidence type="ECO:0000255" key="2">
    <source>
        <dbReference type="PROSITE-ProRule" id="PRU00711"/>
    </source>
</evidence>
<accession>P0AAL7</accession>
<accession>P77186</accession>
<gene>
    <name type="primary">ydhY</name>
    <name type="ordered locus">Z2702</name>
    <name type="ordered locus">ECs2381</name>
</gene>
<proteinExistence type="predicted"/>
<protein>
    <recommendedName>
        <fullName>Uncharacterized ferredoxin-like protein YdhY</fullName>
    </recommendedName>
</protein>
<name>YDHY_ECO57</name>
<keyword id="KW-0004">4Fe-4S</keyword>
<keyword id="KW-0408">Iron</keyword>
<keyword id="KW-0411">Iron-sulfur</keyword>
<keyword id="KW-0479">Metal-binding</keyword>
<keyword id="KW-1185">Reference proteome</keyword>
<keyword id="KW-0677">Repeat</keyword>
<sequence>MNPVDRPLLDIGLTRLEFLRISGKGLAGLTIAPALLSLLGCKQEDIDSGTVGLINTPKGVLVTQRARCTGCHRCEISCTNFNDGSVGTFFSRIKIHRNYFFGDNGVGSGGGLYGDLNYTADTCRQCKEPQCMNVCPIGAITWQQKEGCITVDHKRCIGCSACTTACPWMMATVNTESKKSSKCVLCGECANACPTGALKIIEWKDITV</sequence>
<organism>
    <name type="scientific">Escherichia coli O157:H7</name>
    <dbReference type="NCBI Taxonomy" id="83334"/>
    <lineage>
        <taxon>Bacteria</taxon>
        <taxon>Pseudomonadati</taxon>
        <taxon>Pseudomonadota</taxon>
        <taxon>Gammaproteobacteria</taxon>
        <taxon>Enterobacterales</taxon>
        <taxon>Enterobacteriaceae</taxon>
        <taxon>Escherichia</taxon>
    </lineage>
</organism>